<reference key="1">
    <citation type="submission" date="2005-11" db="EMBL/GenBank/DDBJ databases">
        <title>Isolation, identification of the swine apolipoprotein M gene.</title>
        <authorList>
            <person name="Pan G."/>
            <person name="Xiong Y.Z."/>
        </authorList>
    </citation>
    <scope>NUCLEOTIDE SEQUENCE [MRNA]</scope>
</reference>
<reference key="2">
    <citation type="submission" date="2006-05" db="EMBL/GenBank/DDBJ databases">
        <title>The swine apolipoprotein M gene isolated from liver cDNA.</title>
        <authorList>
            <person name="Pan G."/>
            <person name="Xiong Y.Z."/>
        </authorList>
    </citation>
    <scope>NUCLEOTIDE SEQUENCE [GENOMIC DNA]</scope>
    <source>
        <tissue>Liver</tissue>
    </source>
</reference>
<reference key="3">
    <citation type="submission" date="2007-05" db="EMBL/GenBank/DDBJ databases">
        <authorList>
            <consortium name="Porcine genome sequencing project"/>
        </authorList>
    </citation>
    <scope>NUCLEOTIDE SEQUENCE [LARGE SCALE GENOMIC DNA]</scope>
</reference>
<name>APOM_PIG</name>
<feature type="chain" id="PRO_0000296390" description="Apolipoprotein M">
    <location>
        <begin position="1"/>
        <end position="188"/>
    </location>
</feature>
<feature type="signal peptide" description="Not cleaved" evidence="1">
    <location>
        <begin position="1"/>
        <end position="22" status="uncertain"/>
    </location>
</feature>
<feature type="binding site" evidence="2">
    <location>
        <position position="136"/>
    </location>
    <ligand>
        <name>tetradecanoate</name>
        <dbReference type="ChEBI" id="CHEBI:30807"/>
    </ligand>
</feature>
<feature type="binding site" evidence="2">
    <location>
        <position position="143"/>
    </location>
    <ligand>
        <name>tetradecanoate</name>
        <dbReference type="ChEBI" id="CHEBI:30807"/>
    </ligand>
</feature>
<feature type="disulfide bond" evidence="1">
    <location>
        <begin position="23"/>
        <end position="167"/>
    </location>
</feature>
<feature type="disulfide bond" evidence="1">
    <location>
        <begin position="95"/>
        <end position="183"/>
    </location>
</feature>
<feature type="disulfide bond" evidence="1">
    <location>
        <begin position="128"/>
        <end position="157"/>
    </location>
</feature>
<evidence type="ECO:0000250" key="1"/>
<evidence type="ECO:0000250" key="2">
    <source>
        <dbReference type="UniProtKB" id="O95445"/>
    </source>
</evidence>
<evidence type="ECO:0000250" key="3">
    <source>
        <dbReference type="UniProtKB" id="Q9Z1R3"/>
    </source>
</evidence>
<evidence type="ECO:0000305" key="4"/>
<organism>
    <name type="scientific">Sus scrofa</name>
    <name type="common">Pig</name>
    <dbReference type="NCBI Taxonomy" id="9823"/>
    <lineage>
        <taxon>Eukaryota</taxon>
        <taxon>Metazoa</taxon>
        <taxon>Chordata</taxon>
        <taxon>Craniata</taxon>
        <taxon>Vertebrata</taxon>
        <taxon>Euteleostomi</taxon>
        <taxon>Mammalia</taxon>
        <taxon>Eutheria</taxon>
        <taxon>Laurasiatheria</taxon>
        <taxon>Artiodactyla</taxon>
        <taxon>Suina</taxon>
        <taxon>Suidae</taxon>
        <taxon>Sus</taxon>
    </lineage>
</organism>
<comment type="function">
    <text evidence="1">Probably involved in lipid transport. Can bind sphingosine-1-phosphate, myristic acid, palmitic acid and stearic acid, retinol, all-trans-retinoic acid and 9-cis-retinoic acid (By similarity).</text>
</comment>
<comment type="subunit">
    <text evidence="3">Interacts with LRP2; LRP2 mediates APOM renal uptake and subsequent lysosomal degradation.</text>
</comment>
<comment type="subcellular location">
    <subcellularLocation>
        <location evidence="1">Secreted</location>
    </subcellularLocation>
</comment>
<comment type="similarity">
    <text evidence="4">Belongs to the calycin superfamily. Lipocalin family. Highly divergent.</text>
</comment>
<keyword id="KW-1015">Disulfide bond</keyword>
<keyword id="KW-0345">HDL</keyword>
<keyword id="KW-0445">Lipid transport</keyword>
<keyword id="KW-1185">Reference proteome</keyword>
<keyword id="KW-0964">Secreted</keyword>
<keyword id="KW-0732">Signal</keyword>
<keyword id="KW-0813">Transport</keyword>
<gene>
    <name type="primary">APOM</name>
</gene>
<protein>
    <recommendedName>
        <fullName>Apolipoprotein M</fullName>
        <shortName>Apo-M</shortName>
        <shortName>ApoM</shortName>
    </recommendedName>
</protein>
<sequence length="188" mass="21241">MFHQIWAALLYLYGILLNSIYQCPEHSQLTTGGVDGKEFPEPHLGQWYFIAGAAPTKEELATFDPVDNIVFNMAAGSVPMQLQLRATIRTKNGLCVPRKWIYRLSEGNTDLRTEGRPDMKTKLFSSTCPGGIMLKETGQGYQRFLLYNRSPHPPEKCVEEFQSLTSCLDFKAFLLTPRNQEACELSSN</sequence>
<proteinExistence type="evidence at transcript level"/>
<accession>Q2LE37</accession>
<dbReference type="EMBL" id="DQ329240">
    <property type="protein sequence ID" value="ABC59064.1"/>
    <property type="molecule type" value="mRNA"/>
</dbReference>
<dbReference type="EMBL" id="DQ272488">
    <property type="protein sequence ID" value="ABB85067.1"/>
    <property type="molecule type" value="Genomic_DNA"/>
</dbReference>
<dbReference type="EMBL" id="BX548169">
    <property type="protein sequence ID" value="CAN59667.1"/>
    <property type="molecule type" value="Genomic_DNA"/>
</dbReference>
<dbReference type="RefSeq" id="NP_001035730.1">
    <property type="nucleotide sequence ID" value="NM_001040640.1"/>
</dbReference>
<dbReference type="SMR" id="Q2LE37"/>
<dbReference type="FunCoup" id="Q2LE37">
    <property type="interactions" value="176"/>
</dbReference>
<dbReference type="STRING" id="9823.ENSSSCP00000048219"/>
<dbReference type="PaxDb" id="9823-ENSSSCP00000001505"/>
<dbReference type="PeptideAtlas" id="Q2LE37"/>
<dbReference type="Ensembl" id="ENSSSCT00000001547.7">
    <property type="protein sequence ID" value="ENSSSCP00000001505.2"/>
    <property type="gene ID" value="ENSSSCG00000001411.7"/>
</dbReference>
<dbReference type="Ensembl" id="ENSSSCT00015107654.1">
    <property type="protein sequence ID" value="ENSSSCP00015045507.1"/>
    <property type="gene ID" value="ENSSSCG00015079344.1"/>
</dbReference>
<dbReference type="Ensembl" id="ENSSSCT00015107805.1">
    <property type="protein sequence ID" value="ENSSSCP00015045617.1"/>
    <property type="gene ID" value="ENSSSCG00015079344.1"/>
</dbReference>
<dbReference type="Ensembl" id="ENSSSCT00025108177.1">
    <property type="protein sequence ID" value="ENSSSCP00025048961.1"/>
    <property type="gene ID" value="ENSSSCG00025077716.1"/>
</dbReference>
<dbReference type="Ensembl" id="ENSSSCT00030085765.1">
    <property type="protein sequence ID" value="ENSSSCP00030039549.1"/>
    <property type="gene ID" value="ENSSSCG00030061308.1"/>
</dbReference>
<dbReference type="Ensembl" id="ENSSSCT00035022041.1">
    <property type="protein sequence ID" value="ENSSSCP00035008051.1"/>
    <property type="gene ID" value="ENSSSCG00035017168.1"/>
</dbReference>
<dbReference type="Ensembl" id="ENSSSCT00040093813.1">
    <property type="protein sequence ID" value="ENSSSCP00040041427.1"/>
    <property type="gene ID" value="ENSSSCG00040068399.1"/>
</dbReference>
<dbReference type="Ensembl" id="ENSSSCT00045064247.1">
    <property type="protein sequence ID" value="ENSSSCP00045045368.1"/>
    <property type="gene ID" value="ENSSSCG00045037175.1"/>
</dbReference>
<dbReference type="Ensembl" id="ENSSSCT00050010572.1">
    <property type="protein sequence ID" value="ENSSSCP00050004542.1"/>
    <property type="gene ID" value="ENSSSCG00050007721.1"/>
</dbReference>
<dbReference type="Ensembl" id="ENSSSCT00055055816.1">
    <property type="protein sequence ID" value="ENSSSCP00055044558.1"/>
    <property type="gene ID" value="ENSSSCG00055028122.1"/>
</dbReference>
<dbReference type="Ensembl" id="ENSSSCT00060071322.1">
    <property type="protein sequence ID" value="ENSSSCP00060030783.1"/>
    <property type="gene ID" value="ENSSSCG00060052387.1"/>
</dbReference>
<dbReference type="Ensembl" id="ENSSSCT00065050216.1">
    <property type="protein sequence ID" value="ENSSSCP00065021739.1"/>
    <property type="gene ID" value="ENSSSCG00065036803.1"/>
</dbReference>
<dbReference type="Ensembl" id="ENSSSCT00070047620.1">
    <property type="protein sequence ID" value="ENSSSCP00070040188.1"/>
    <property type="gene ID" value="ENSSSCG00070023864.1"/>
</dbReference>
<dbReference type="Ensembl" id="ENSSSCT00085021203">
    <property type="protein sequence ID" value="ENSSSCP00085014629"/>
    <property type="gene ID" value="ENSSSCG00085011333"/>
</dbReference>
<dbReference type="Ensembl" id="ENSSSCT00090029743">
    <property type="protein sequence ID" value="ENSSSCP00090018405"/>
    <property type="gene ID" value="ENSSSCG00090016878"/>
</dbReference>
<dbReference type="Ensembl" id="ENSSSCT00110044085">
    <property type="protein sequence ID" value="ENSSSCP00110031054"/>
    <property type="gene ID" value="ENSSSCG00110022773"/>
</dbReference>
<dbReference type="Ensembl" id="ENSSSCT00115020887">
    <property type="protein sequence ID" value="ENSSSCP00115019784"/>
    <property type="gene ID" value="ENSSSCG00115012066"/>
</dbReference>
<dbReference type="Ensembl" id="ENSSSCT00130043779">
    <property type="protein sequence ID" value="ENSSSCP00130030778"/>
    <property type="gene ID" value="ENSSSCG00130022656"/>
</dbReference>
<dbReference type="GeneID" id="692188"/>
<dbReference type="KEGG" id="ssc:692188"/>
<dbReference type="CTD" id="55937"/>
<dbReference type="VGNC" id="VGNC:85424">
    <property type="gene designation" value="APOM"/>
</dbReference>
<dbReference type="eggNOG" id="ENOG502S2IN">
    <property type="taxonomic scope" value="Eukaryota"/>
</dbReference>
<dbReference type="GeneTree" id="ENSGT00390000001026"/>
<dbReference type="HOGENOM" id="CLU_105274_0_0_1"/>
<dbReference type="InParanoid" id="Q2LE37"/>
<dbReference type="OrthoDB" id="9944312at2759"/>
<dbReference type="TreeFam" id="TF330771"/>
<dbReference type="Reactome" id="R-SSC-975634">
    <property type="pathway name" value="Retinoid metabolism and transport"/>
</dbReference>
<dbReference type="Proteomes" id="UP000008227">
    <property type="component" value="Chromosome 7"/>
</dbReference>
<dbReference type="Proteomes" id="UP000314985">
    <property type="component" value="Chromosome 7"/>
</dbReference>
<dbReference type="Proteomes" id="UP000694570">
    <property type="component" value="Unplaced"/>
</dbReference>
<dbReference type="Proteomes" id="UP000694571">
    <property type="component" value="Unplaced"/>
</dbReference>
<dbReference type="Proteomes" id="UP000694720">
    <property type="component" value="Unplaced"/>
</dbReference>
<dbReference type="Proteomes" id="UP000694722">
    <property type="component" value="Unplaced"/>
</dbReference>
<dbReference type="Proteomes" id="UP000694723">
    <property type="component" value="Unplaced"/>
</dbReference>
<dbReference type="Proteomes" id="UP000694724">
    <property type="component" value="Unplaced"/>
</dbReference>
<dbReference type="Proteomes" id="UP000694725">
    <property type="component" value="Unplaced"/>
</dbReference>
<dbReference type="Proteomes" id="UP000694726">
    <property type="component" value="Unplaced"/>
</dbReference>
<dbReference type="Proteomes" id="UP000694727">
    <property type="component" value="Unplaced"/>
</dbReference>
<dbReference type="Proteomes" id="UP000694728">
    <property type="component" value="Unplaced"/>
</dbReference>
<dbReference type="Bgee" id="ENSSSCG00000001411">
    <property type="expression patterns" value="Expressed in right lobe of liver and 43 other cell types or tissues"/>
</dbReference>
<dbReference type="ExpressionAtlas" id="Q2LE37">
    <property type="expression patterns" value="baseline and differential"/>
</dbReference>
<dbReference type="GO" id="GO:0034365">
    <property type="term" value="C:discoidal high-density lipoprotein particle"/>
    <property type="evidence" value="ECO:0007669"/>
    <property type="project" value="Ensembl"/>
</dbReference>
<dbReference type="GO" id="GO:0034364">
    <property type="term" value="C:high-density lipoprotein particle"/>
    <property type="evidence" value="ECO:0000318"/>
    <property type="project" value="GO_Central"/>
</dbReference>
<dbReference type="GO" id="GO:0034362">
    <property type="term" value="C:low-density lipoprotein particle"/>
    <property type="evidence" value="ECO:0000318"/>
    <property type="project" value="GO_Central"/>
</dbReference>
<dbReference type="GO" id="GO:0034366">
    <property type="term" value="C:spherical high-density lipoprotein particle"/>
    <property type="evidence" value="ECO:0007669"/>
    <property type="project" value="Ensembl"/>
</dbReference>
<dbReference type="GO" id="GO:0034361">
    <property type="term" value="C:very-low-density lipoprotein particle"/>
    <property type="evidence" value="ECO:0000318"/>
    <property type="project" value="GO_Central"/>
</dbReference>
<dbReference type="GO" id="GO:0016209">
    <property type="term" value="F:antioxidant activity"/>
    <property type="evidence" value="ECO:0007669"/>
    <property type="project" value="Ensembl"/>
</dbReference>
<dbReference type="GO" id="GO:0005319">
    <property type="term" value="F:lipid transporter activity"/>
    <property type="evidence" value="ECO:0000318"/>
    <property type="project" value="GO_Central"/>
</dbReference>
<dbReference type="GO" id="GO:0005543">
    <property type="term" value="F:phospholipid binding"/>
    <property type="evidence" value="ECO:0000318"/>
    <property type="project" value="GO_Central"/>
</dbReference>
<dbReference type="GO" id="GO:0033344">
    <property type="term" value="P:cholesterol efflux"/>
    <property type="evidence" value="ECO:0000318"/>
    <property type="project" value="GO_Central"/>
</dbReference>
<dbReference type="GO" id="GO:0034380">
    <property type="term" value="P:high-density lipoprotein particle assembly"/>
    <property type="evidence" value="ECO:0000318"/>
    <property type="project" value="GO_Central"/>
</dbReference>
<dbReference type="GO" id="GO:0034384">
    <property type="term" value="P:high-density lipoprotein particle clearance"/>
    <property type="evidence" value="ECO:0000318"/>
    <property type="project" value="GO_Central"/>
</dbReference>
<dbReference type="GO" id="GO:0034375">
    <property type="term" value="P:high-density lipoprotein particle remodeling"/>
    <property type="evidence" value="ECO:0000318"/>
    <property type="project" value="GO_Central"/>
</dbReference>
<dbReference type="GO" id="GO:0042157">
    <property type="term" value="P:lipoprotein metabolic process"/>
    <property type="evidence" value="ECO:0007669"/>
    <property type="project" value="Ensembl"/>
</dbReference>
<dbReference type="GO" id="GO:0034445">
    <property type="term" value="P:negative regulation of plasma lipoprotein oxidation"/>
    <property type="evidence" value="ECO:0007669"/>
    <property type="project" value="Ensembl"/>
</dbReference>
<dbReference type="GO" id="GO:0043691">
    <property type="term" value="P:reverse cholesterol transport"/>
    <property type="evidence" value="ECO:0007669"/>
    <property type="project" value="Ensembl"/>
</dbReference>
<dbReference type="CDD" id="cd19450">
    <property type="entry name" value="lipocalin_ApoM"/>
    <property type="match status" value="1"/>
</dbReference>
<dbReference type="FunFam" id="2.40.128.20:FF:000011">
    <property type="entry name" value="Apolipoprotein M"/>
    <property type="match status" value="1"/>
</dbReference>
<dbReference type="Gene3D" id="2.40.128.20">
    <property type="match status" value="1"/>
</dbReference>
<dbReference type="InterPro" id="IPR022734">
    <property type="entry name" value="ApoM"/>
</dbReference>
<dbReference type="InterPro" id="IPR012674">
    <property type="entry name" value="Calycin"/>
</dbReference>
<dbReference type="PANTHER" id="PTHR32028">
    <property type="entry name" value="APOLIPOPROTEIN M"/>
    <property type="match status" value="1"/>
</dbReference>
<dbReference type="PANTHER" id="PTHR32028:SF1">
    <property type="entry name" value="APOLIPOPROTEIN M"/>
    <property type="match status" value="1"/>
</dbReference>
<dbReference type="Pfam" id="PF11032">
    <property type="entry name" value="ApoM"/>
    <property type="match status" value="1"/>
</dbReference>
<dbReference type="SUPFAM" id="SSF50814">
    <property type="entry name" value="Lipocalins"/>
    <property type="match status" value="1"/>
</dbReference>